<comment type="function">
    <text evidence="1">Component of the ERMES/MDM complex, which serves as a molecular tether to connect the endoplasmic reticulum (ER) and mitochondria. Components of this complex are involved in the control of mitochondrial shape and protein biogenesis, and function in nonvesicular lipid trafficking between the ER and mitochondria. MDM12 is required for the interaction of the ER-resident membrane protein MMM1 and the outer mitochondrial membrane-resident beta-barrel protein MDM10. The MDM12-MMM1 subcomplex functions in the major beta-barrel assembly pathway that is responsible for biogenesis of all mitochondrial outer membrane beta-barrel proteins, and acts in a late step after the SAM complex. The MDM10-MDM12-MMM1 subcomplex further acts in the TOM40-specific pathway after the action of the MDM12-MMM1 complex. Essential for establishing and maintaining the structure of mitochondria and maintenance of mtDNA nucleoids.</text>
</comment>
<comment type="subunit">
    <text evidence="1">Component of the ER-mitochondria encounter structure (ERMES) or MDM complex, composed of MMM1, MDM10, MDM12 and MDM34. A MMM1 homodimer associates with one molecule of MDM12 on each side in a pairwise head-to-tail manner, and the SMP-LTD domains of MMM1 and MDM12 generate a continuous hydrophobic tunnel for phospholipid trafficking.</text>
</comment>
<comment type="subcellular location">
    <subcellularLocation>
        <location evidence="1">Mitochondrion outer membrane</location>
        <topology evidence="1">Peripheral membrane protein</topology>
        <orientation evidence="1">Cytoplasmic side</orientation>
    </subcellularLocation>
    <subcellularLocation>
        <location evidence="1">Endoplasmic reticulum membrane</location>
        <topology evidence="1">Peripheral membrane protein</topology>
        <orientation evidence="1">Cytoplasmic side</orientation>
    </subcellularLocation>
    <text evidence="1">The ERMES/MDM complex localizes to a few discrete foci (around 10 per single cell), that represent mitochondria-endoplasmic reticulum junctions. These foci are often found next to mtDNA nucleoids.</text>
</comment>
<comment type="domain">
    <text evidence="1">The SMP-LTD domain is a barrel-like domain that can bind various types of glycerophospholipids in its interior and mediate their transfer between two adjacent bilayers.</text>
</comment>
<comment type="similarity">
    <text evidence="1">Belongs to the MDM12 family.</text>
</comment>
<name>MDM12_LACBS</name>
<dbReference type="EMBL" id="DS547125">
    <property type="protein sequence ID" value="EDR03303.1"/>
    <property type="molecule type" value="Genomic_DNA"/>
</dbReference>
<dbReference type="RefSeq" id="XP_001886099.1">
    <property type="nucleotide sequence ID" value="XM_001886064.1"/>
</dbReference>
<dbReference type="SMR" id="B0DQ09"/>
<dbReference type="FunCoup" id="B0DQ09">
    <property type="interactions" value="30"/>
</dbReference>
<dbReference type="STRING" id="486041.B0DQ09"/>
<dbReference type="GeneID" id="6081640"/>
<dbReference type="KEGG" id="lbc:LACBIDRAFT_238729"/>
<dbReference type="HOGENOM" id="CLU_026794_1_0_1"/>
<dbReference type="InParanoid" id="B0DQ09"/>
<dbReference type="OrthoDB" id="3356905at2759"/>
<dbReference type="Proteomes" id="UP000001194">
    <property type="component" value="Unassembled WGS sequence"/>
</dbReference>
<dbReference type="GO" id="GO:0005789">
    <property type="term" value="C:endoplasmic reticulum membrane"/>
    <property type="evidence" value="ECO:0007669"/>
    <property type="project" value="UniProtKB-SubCell"/>
</dbReference>
<dbReference type="GO" id="GO:0032865">
    <property type="term" value="C:ERMES complex"/>
    <property type="evidence" value="ECO:0007669"/>
    <property type="project" value="UniProtKB-UniRule"/>
</dbReference>
<dbReference type="GO" id="GO:0008289">
    <property type="term" value="F:lipid binding"/>
    <property type="evidence" value="ECO:0007669"/>
    <property type="project" value="UniProtKB-KW"/>
</dbReference>
<dbReference type="GO" id="GO:0000002">
    <property type="term" value="P:mitochondrial genome maintenance"/>
    <property type="evidence" value="ECO:0007669"/>
    <property type="project" value="UniProtKB-UniRule"/>
</dbReference>
<dbReference type="GO" id="GO:1990456">
    <property type="term" value="P:mitochondrion-endoplasmic reticulum membrane tethering"/>
    <property type="evidence" value="ECO:0007669"/>
    <property type="project" value="TreeGrafter"/>
</dbReference>
<dbReference type="GO" id="GO:0015914">
    <property type="term" value="P:phospholipid transport"/>
    <property type="evidence" value="ECO:0007669"/>
    <property type="project" value="TreeGrafter"/>
</dbReference>
<dbReference type="GO" id="GO:0045040">
    <property type="term" value="P:protein insertion into mitochondrial outer membrane"/>
    <property type="evidence" value="ECO:0007669"/>
    <property type="project" value="UniProtKB-UniRule"/>
</dbReference>
<dbReference type="CDD" id="cd21672">
    <property type="entry name" value="SMP_Mdm12"/>
    <property type="match status" value="1"/>
</dbReference>
<dbReference type="HAMAP" id="MF_03104">
    <property type="entry name" value="Mdm12"/>
    <property type="match status" value="1"/>
</dbReference>
<dbReference type="InterPro" id="IPR027532">
    <property type="entry name" value="Mdm12"/>
</dbReference>
<dbReference type="InterPro" id="IPR019411">
    <property type="entry name" value="MMM1_dom"/>
</dbReference>
<dbReference type="InterPro" id="IPR031468">
    <property type="entry name" value="SMP_LBD"/>
</dbReference>
<dbReference type="PANTHER" id="PTHR28204">
    <property type="entry name" value="MITOCHONDRIAL DISTRIBUTION AND MORPHOLOGY PROTEIN 12"/>
    <property type="match status" value="1"/>
</dbReference>
<dbReference type="PANTHER" id="PTHR28204:SF1">
    <property type="entry name" value="MITOCHONDRIAL DISTRIBUTION AND MORPHOLOGY PROTEIN 12"/>
    <property type="match status" value="1"/>
</dbReference>
<dbReference type="Pfam" id="PF10296">
    <property type="entry name" value="MMM1"/>
    <property type="match status" value="1"/>
</dbReference>
<dbReference type="PROSITE" id="PS51847">
    <property type="entry name" value="SMP"/>
    <property type="match status" value="1"/>
</dbReference>
<keyword id="KW-0256">Endoplasmic reticulum</keyword>
<keyword id="KW-0445">Lipid transport</keyword>
<keyword id="KW-0446">Lipid-binding</keyword>
<keyword id="KW-0472">Membrane</keyword>
<keyword id="KW-0496">Mitochondrion</keyword>
<keyword id="KW-1000">Mitochondrion outer membrane</keyword>
<keyword id="KW-1185">Reference proteome</keyword>
<keyword id="KW-0813">Transport</keyword>
<reference key="1">
    <citation type="journal article" date="2008" name="Nature">
        <title>The genome of Laccaria bicolor provides insights into mycorrhizal symbiosis.</title>
        <authorList>
            <person name="Martin F."/>
            <person name="Aerts A."/>
            <person name="Ahren D."/>
            <person name="Brun A."/>
            <person name="Danchin E.G.J."/>
            <person name="Duchaussoy F."/>
            <person name="Gibon J."/>
            <person name="Kohler A."/>
            <person name="Lindquist E."/>
            <person name="Pereda V."/>
            <person name="Salamov A."/>
            <person name="Shapiro H.J."/>
            <person name="Wuyts J."/>
            <person name="Blaudez D."/>
            <person name="Buee M."/>
            <person name="Brokstein P."/>
            <person name="Canbaeck B."/>
            <person name="Cohen D."/>
            <person name="Courty P.E."/>
            <person name="Coutinho P.M."/>
            <person name="Delaruelle C."/>
            <person name="Detter J.C."/>
            <person name="Deveau A."/>
            <person name="DiFazio S."/>
            <person name="Duplessis S."/>
            <person name="Fraissinet-Tachet L."/>
            <person name="Lucic E."/>
            <person name="Frey-Klett P."/>
            <person name="Fourrey C."/>
            <person name="Feussner I."/>
            <person name="Gay G."/>
            <person name="Grimwood J."/>
            <person name="Hoegger P.J."/>
            <person name="Jain P."/>
            <person name="Kilaru S."/>
            <person name="Labbe J."/>
            <person name="Lin Y.C."/>
            <person name="Legue V."/>
            <person name="Le Tacon F."/>
            <person name="Marmeisse R."/>
            <person name="Melayah D."/>
            <person name="Montanini B."/>
            <person name="Muratet M."/>
            <person name="Nehls U."/>
            <person name="Niculita-Hirzel H."/>
            <person name="Oudot-Le Secq M.P."/>
            <person name="Peter M."/>
            <person name="Quesneville H."/>
            <person name="Rajashekar B."/>
            <person name="Reich M."/>
            <person name="Rouhier N."/>
            <person name="Schmutz J."/>
            <person name="Yin T."/>
            <person name="Chalot M."/>
            <person name="Henrissat B."/>
            <person name="Kuees U."/>
            <person name="Lucas S."/>
            <person name="Van de Peer Y."/>
            <person name="Podila G.K."/>
            <person name="Polle A."/>
            <person name="Pukkila P.J."/>
            <person name="Richardson P.M."/>
            <person name="Rouze P."/>
            <person name="Sanders I.R."/>
            <person name="Stajich J.E."/>
            <person name="Tunlid A."/>
            <person name="Tuskan G."/>
            <person name="Grigoriev I.V."/>
        </authorList>
    </citation>
    <scope>NUCLEOTIDE SEQUENCE [LARGE SCALE GENOMIC DNA]</scope>
    <source>
        <strain>S238N-H82 / ATCC MYA-4686</strain>
    </source>
</reference>
<protein>
    <recommendedName>
        <fullName evidence="1">Mitochondrial distribution and morphology protein 12</fullName>
    </recommendedName>
    <alternativeName>
        <fullName evidence="1">Mitochondrial inheritance component MDM12</fullName>
    </alternativeName>
</protein>
<sequence length="268" mass="30093">MSIDLEWCKLDSSLATYLVEVLNRQLGNAERPSFIGPVEVTSLDFGSASPDVELVDLRDIYRDFLEDDEEGSDRGPVKVTEGAEDEEGFEWVGEYDRGASIPATNVTSSLDTRSDQPDDQKAPLLPPPPAENPHPNLQLHLHVNWHSNLRITLTTSLLINYPSPMFMSLPIKLSVTGLIFIGELAVAYEGERRRVHLCILDDLDPYGPAGDRQRLLPSIYIESEIGQADKHVLKNVTRVERFIQDVIRKTVEEELVFPNFHTIVMADS</sequence>
<gene>
    <name evidence="1" type="primary">MDM12</name>
    <name type="ORF">LACBIDRAFT_238729</name>
</gene>
<organism>
    <name type="scientific">Laccaria bicolor (strain S238N-H82 / ATCC MYA-4686)</name>
    <name type="common">Bicoloured deceiver</name>
    <name type="synonym">Laccaria laccata var. bicolor</name>
    <dbReference type="NCBI Taxonomy" id="486041"/>
    <lineage>
        <taxon>Eukaryota</taxon>
        <taxon>Fungi</taxon>
        <taxon>Dikarya</taxon>
        <taxon>Basidiomycota</taxon>
        <taxon>Agaricomycotina</taxon>
        <taxon>Agaricomycetes</taxon>
        <taxon>Agaricomycetidae</taxon>
        <taxon>Agaricales</taxon>
        <taxon>Agaricineae</taxon>
        <taxon>Hydnangiaceae</taxon>
        <taxon>Laccaria</taxon>
    </lineage>
</organism>
<feature type="chain" id="PRO_0000384289" description="Mitochondrial distribution and morphology protein 12">
    <location>
        <begin position="1"/>
        <end position="268"/>
    </location>
</feature>
<feature type="domain" description="SMP-LTD" evidence="1">
    <location>
        <begin position="1"/>
        <end position="266"/>
    </location>
</feature>
<feature type="region of interest" description="Disordered" evidence="2">
    <location>
        <begin position="66"/>
        <end position="136"/>
    </location>
</feature>
<feature type="compositionally biased region" description="Polar residues" evidence="2">
    <location>
        <begin position="102"/>
        <end position="111"/>
    </location>
</feature>
<feature type="compositionally biased region" description="Basic and acidic residues" evidence="2">
    <location>
        <begin position="112"/>
        <end position="121"/>
    </location>
</feature>
<accession>B0DQ09</accession>
<evidence type="ECO:0000255" key="1">
    <source>
        <dbReference type="HAMAP-Rule" id="MF_03104"/>
    </source>
</evidence>
<evidence type="ECO:0000256" key="2">
    <source>
        <dbReference type="SAM" id="MobiDB-lite"/>
    </source>
</evidence>
<proteinExistence type="inferred from homology"/>